<gene>
    <name type="primary">jip5</name>
    <name type="ORF">An07g09340</name>
</gene>
<reference key="1">
    <citation type="journal article" date="2007" name="Nat. Biotechnol.">
        <title>Genome sequencing and analysis of the versatile cell factory Aspergillus niger CBS 513.88.</title>
        <authorList>
            <person name="Pel H.J."/>
            <person name="de Winde J.H."/>
            <person name="Archer D.B."/>
            <person name="Dyer P.S."/>
            <person name="Hofmann G."/>
            <person name="Schaap P.J."/>
            <person name="Turner G."/>
            <person name="de Vries R.P."/>
            <person name="Albang R."/>
            <person name="Albermann K."/>
            <person name="Andersen M.R."/>
            <person name="Bendtsen J.D."/>
            <person name="Benen J.A.E."/>
            <person name="van den Berg M."/>
            <person name="Breestraat S."/>
            <person name="Caddick M.X."/>
            <person name="Contreras R."/>
            <person name="Cornell M."/>
            <person name="Coutinho P.M."/>
            <person name="Danchin E.G.J."/>
            <person name="Debets A.J.M."/>
            <person name="Dekker P."/>
            <person name="van Dijck P.W.M."/>
            <person name="van Dijk A."/>
            <person name="Dijkhuizen L."/>
            <person name="Driessen A.J.M."/>
            <person name="d'Enfert C."/>
            <person name="Geysens S."/>
            <person name="Goosen C."/>
            <person name="Groot G.S.P."/>
            <person name="de Groot P.W.J."/>
            <person name="Guillemette T."/>
            <person name="Henrissat B."/>
            <person name="Herweijer M."/>
            <person name="van den Hombergh J.P.T.W."/>
            <person name="van den Hondel C.A.M.J.J."/>
            <person name="van der Heijden R.T.J.M."/>
            <person name="van der Kaaij R.M."/>
            <person name="Klis F.M."/>
            <person name="Kools H.J."/>
            <person name="Kubicek C.P."/>
            <person name="van Kuyk P.A."/>
            <person name="Lauber J."/>
            <person name="Lu X."/>
            <person name="van der Maarel M.J.E.C."/>
            <person name="Meulenberg R."/>
            <person name="Menke H."/>
            <person name="Mortimer M.A."/>
            <person name="Nielsen J."/>
            <person name="Oliver S.G."/>
            <person name="Olsthoorn M."/>
            <person name="Pal K."/>
            <person name="van Peij N.N.M.E."/>
            <person name="Ram A.F.J."/>
            <person name="Rinas U."/>
            <person name="Roubos J.A."/>
            <person name="Sagt C.M.J."/>
            <person name="Schmoll M."/>
            <person name="Sun J."/>
            <person name="Ussery D."/>
            <person name="Varga J."/>
            <person name="Vervecken W."/>
            <person name="van de Vondervoort P.J.J."/>
            <person name="Wedler H."/>
            <person name="Woesten H.A.B."/>
            <person name="Zeng A.-P."/>
            <person name="van Ooyen A.J.J."/>
            <person name="Visser J."/>
            <person name="Stam H."/>
        </authorList>
    </citation>
    <scope>NUCLEOTIDE SEQUENCE [LARGE SCALE GENOMIC DNA]</scope>
    <source>
        <strain>ATCC MYA-4892 / CBS 513.88 / FGSC A1513</strain>
    </source>
</reference>
<dbReference type="EMBL" id="AM270149">
    <property type="protein sequence ID" value="CAK39700.1"/>
    <property type="molecule type" value="Genomic_DNA"/>
</dbReference>
<dbReference type="RefSeq" id="XP_001392009.1">
    <property type="nucleotide sequence ID" value="XM_001391972.2"/>
</dbReference>
<dbReference type="SMR" id="A2QPG3"/>
<dbReference type="EnsemblFungi" id="CAK39700">
    <property type="protein sequence ID" value="CAK39700"/>
    <property type="gene ID" value="An07g09340"/>
</dbReference>
<dbReference type="GeneID" id="4982203"/>
<dbReference type="KEGG" id="ang:An07g09340"/>
<dbReference type="VEuPathDB" id="FungiDB:An07g09340"/>
<dbReference type="HOGENOM" id="CLU_052691_0_0_1"/>
<dbReference type="Proteomes" id="UP000006706">
    <property type="component" value="Chromosome 4L"/>
</dbReference>
<dbReference type="GO" id="GO:0005730">
    <property type="term" value="C:nucleolus"/>
    <property type="evidence" value="ECO:0007669"/>
    <property type="project" value="UniProtKB-SubCell"/>
</dbReference>
<dbReference type="Gene3D" id="2.130.10.10">
    <property type="entry name" value="YVTN repeat-like/Quinoprotein amine dehydrogenase"/>
    <property type="match status" value="1"/>
</dbReference>
<dbReference type="InterPro" id="IPR015943">
    <property type="entry name" value="WD40/YVTN_repeat-like_dom_sf"/>
</dbReference>
<dbReference type="InterPro" id="IPR036322">
    <property type="entry name" value="WD40_repeat_dom_sf"/>
</dbReference>
<dbReference type="InterPro" id="IPR050505">
    <property type="entry name" value="WDR55_POC1"/>
</dbReference>
<dbReference type="PANTHER" id="PTHR44019">
    <property type="entry name" value="WD REPEAT-CONTAINING PROTEIN 55"/>
    <property type="match status" value="1"/>
</dbReference>
<dbReference type="PANTHER" id="PTHR44019:SF20">
    <property type="entry name" value="WD REPEAT-CONTAINING PROTEIN 55"/>
    <property type="match status" value="1"/>
</dbReference>
<dbReference type="SUPFAM" id="SSF50978">
    <property type="entry name" value="WD40 repeat-like"/>
    <property type="match status" value="1"/>
</dbReference>
<keyword id="KW-0539">Nucleus</keyword>
<keyword id="KW-1185">Reference proteome</keyword>
<keyword id="KW-0677">Repeat</keyword>
<keyword id="KW-0853">WD repeat</keyword>
<accession>A2QPG3</accession>
<evidence type="ECO:0000250" key="1"/>
<evidence type="ECO:0000256" key="2">
    <source>
        <dbReference type="SAM" id="MobiDB-lite"/>
    </source>
</evidence>
<evidence type="ECO:0000305" key="3"/>
<proteinExistence type="inferred from homology"/>
<sequence length="425" mass="45242">MFDTVCTLPLSADLFSQALHPKEPVVSVGLSSGHVQTFRLPTDEAASDDDETSNASSRNGRGHIDTMWRTRRHKGSCRCLTFGIDGETLYSAGTDGLIKAAKAETGVVENKIAIPTEKNGSIDAPTIIHALSPQTLLLATDSSALHLYDLRIPYSKVSAKPEQSHHPHDDYVSSLTPLPASDTSTSGFSKQWVTTGGTTLAVTDLRRGVLVRSEDQEEELISSTYIGGLAASGTSRGEKVLVGGSGGVLTLWEKGAWDDQDERIYVERGGGGGESLETMAVLPDELGKGKVVAVGLGNGRVKFVRIGANKVAAEVMHDETEGVIGLGFDVEGRMVTGGGQVVKVWHEAVVGADRYGAMPGEKRMYGDSDDSDEGDDSDDDSDDSDAGGRQDKPQNKRKKTKAKGKGGQQIMAFHDLDSMESSVVY</sequence>
<protein>
    <recommendedName>
        <fullName>WD repeat-containing protein jip5</fullName>
    </recommendedName>
</protein>
<comment type="subcellular location">
    <subcellularLocation>
        <location evidence="1">Nucleus</location>
        <location evidence="1">Nucleolus</location>
    </subcellularLocation>
</comment>
<comment type="similarity">
    <text evidence="3">Belongs to the WD repeat WDR55 family.</text>
</comment>
<name>JIP5_ASPNC</name>
<organism>
    <name type="scientific">Aspergillus niger (strain ATCC MYA-4892 / CBS 513.88 / FGSC A1513)</name>
    <dbReference type="NCBI Taxonomy" id="425011"/>
    <lineage>
        <taxon>Eukaryota</taxon>
        <taxon>Fungi</taxon>
        <taxon>Dikarya</taxon>
        <taxon>Ascomycota</taxon>
        <taxon>Pezizomycotina</taxon>
        <taxon>Eurotiomycetes</taxon>
        <taxon>Eurotiomycetidae</taxon>
        <taxon>Eurotiales</taxon>
        <taxon>Aspergillaceae</taxon>
        <taxon>Aspergillus</taxon>
        <taxon>Aspergillus subgen. Circumdati</taxon>
    </lineage>
</organism>
<feature type="chain" id="PRO_0000333548" description="WD repeat-containing protein jip5">
    <location>
        <begin position="1"/>
        <end position="425"/>
    </location>
</feature>
<feature type="repeat" description="WD 1">
    <location>
        <begin position="9"/>
        <end position="48"/>
    </location>
</feature>
<feature type="repeat" description="WD 2">
    <location>
        <begin position="72"/>
        <end position="111"/>
    </location>
</feature>
<feature type="repeat" description="WD 3">
    <location>
        <begin position="117"/>
        <end position="158"/>
    </location>
</feature>
<feature type="repeat" description="WD 4">
    <location>
        <begin position="221"/>
        <end position="262"/>
    </location>
</feature>
<feature type="repeat" description="WD 5">
    <location>
        <begin position="318"/>
        <end position="355"/>
    </location>
</feature>
<feature type="region of interest" description="Disordered" evidence="2">
    <location>
        <begin position="40"/>
        <end position="63"/>
    </location>
</feature>
<feature type="region of interest" description="Disordered" evidence="2">
    <location>
        <begin position="358"/>
        <end position="425"/>
    </location>
</feature>
<feature type="compositionally biased region" description="Acidic residues" evidence="2">
    <location>
        <begin position="367"/>
        <end position="385"/>
    </location>
</feature>
<feature type="compositionally biased region" description="Basic residues" evidence="2">
    <location>
        <begin position="395"/>
        <end position="404"/>
    </location>
</feature>